<name>LSRK_ENT38</name>
<organism>
    <name type="scientific">Enterobacter sp. (strain 638)</name>
    <dbReference type="NCBI Taxonomy" id="399742"/>
    <lineage>
        <taxon>Bacteria</taxon>
        <taxon>Pseudomonadati</taxon>
        <taxon>Pseudomonadota</taxon>
        <taxon>Gammaproteobacteria</taxon>
        <taxon>Enterobacterales</taxon>
        <taxon>Enterobacteriaceae</taxon>
        <taxon>Enterobacter</taxon>
    </lineage>
</organism>
<gene>
    <name evidence="1" type="primary">lsrK</name>
    <name type="ordered locus">Ent638_3538</name>
</gene>
<sequence length="530" mass="57400">MSYLLALDAGTGSVRAVIFDLHGNQISVGQAEWKHLSVENVPGSMEFDLDTNWRLACQCIHQALERAHLNAADIQSVACCSMREGIVLYDRNGDAIWACANVDARASREVAELKEIHDYRFESEVYDVSGQTLALSAMPRLLWLAHHRPDIYRNAATITMISDWLAAKLSGELAVDPSNAGTTGMLDLFSRDWRPALLDMAGLRADILSPVKETGTVLGAVTKAAASQSGLREGTPVVMGGGDVQLGCLGLGVVRAGQTAVLGGTFWQQVVNLPQVRTDPDMNIRVNPHVIPGMAQAESISFFTGLTMRWFRDAFCAEEKLIAERMGMDAYALLEEMANRVPAGSHGVMPIFSDAMHFKQWYHAAPSFINLSIDPEKCNKATLFRALEENAAIVSACNLAQISRFSGVTFESLVFAGGGAKGALWSQILSDVTGLPVRVPEVKEATALGCAIAAGTGAGLYNDMAATGEKLVKWSREFTPNPEHRELYDGMMQKWQAVYADQLGLVDSGLTTSMWQAPGLVRVPSPRPSP</sequence>
<keyword id="KW-0963">Cytoplasm</keyword>
<keyword id="KW-0418">Kinase</keyword>
<keyword id="KW-0808">Transferase</keyword>
<reference key="1">
    <citation type="journal article" date="2010" name="PLoS Genet.">
        <title>Genome sequence of the plant growth promoting endophytic bacterium Enterobacter sp. 638.</title>
        <authorList>
            <person name="Taghavi S."/>
            <person name="van der Lelie D."/>
            <person name="Hoffman A."/>
            <person name="Zhang Y.B."/>
            <person name="Walla M.D."/>
            <person name="Vangronsveld J."/>
            <person name="Newman L."/>
            <person name="Monchy S."/>
        </authorList>
    </citation>
    <scope>NUCLEOTIDE SEQUENCE [LARGE SCALE GENOMIC DNA]</scope>
    <source>
        <strain>638</strain>
    </source>
</reference>
<accession>A4WER6</accession>
<feature type="chain" id="PRO_0000351586" description="Autoinducer-2 kinase">
    <location>
        <begin position="1"/>
        <end position="530"/>
    </location>
</feature>
<dbReference type="EC" id="2.7.1.189" evidence="1"/>
<dbReference type="EMBL" id="CP000653">
    <property type="protein sequence ID" value="ABP62196.1"/>
    <property type="molecule type" value="Genomic_DNA"/>
</dbReference>
<dbReference type="RefSeq" id="WP_015960522.1">
    <property type="nucleotide sequence ID" value="NC_009436.1"/>
</dbReference>
<dbReference type="SMR" id="A4WER6"/>
<dbReference type="STRING" id="399742.Ent638_3538"/>
<dbReference type="KEGG" id="ent:Ent638_3538"/>
<dbReference type="eggNOG" id="COG1070">
    <property type="taxonomic scope" value="Bacteria"/>
</dbReference>
<dbReference type="HOGENOM" id="CLU_009281_3_4_6"/>
<dbReference type="OrthoDB" id="9805576at2"/>
<dbReference type="Proteomes" id="UP000000230">
    <property type="component" value="Chromosome"/>
</dbReference>
<dbReference type="GO" id="GO:0005737">
    <property type="term" value="C:cytoplasm"/>
    <property type="evidence" value="ECO:0007669"/>
    <property type="project" value="UniProtKB-SubCell"/>
</dbReference>
<dbReference type="GO" id="GO:0071518">
    <property type="term" value="F:autoinducer-2 kinase activity"/>
    <property type="evidence" value="ECO:0007669"/>
    <property type="project" value="UniProtKB-UniRule"/>
</dbReference>
<dbReference type="GO" id="GO:0005975">
    <property type="term" value="P:carbohydrate metabolic process"/>
    <property type="evidence" value="ECO:0007669"/>
    <property type="project" value="InterPro"/>
</dbReference>
<dbReference type="GO" id="GO:0009372">
    <property type="term" value="P:quorum sensing"/>
    <property type="evidence" value="ECO:0007669"/>
    <property type="project" value="InterPro"/>
</dbReference>
<dbReference type="CDD" id="cd07775">
    <property type="entry name" value="ASKHA_NBD_FGGY_AI-2K"/>
    <property type="match status" value="1"/>
</dbReference>
<dbReference type="Gene3D" id="3.30.420.40">
    <property type="match status" value="2"/>
</dbReference>
<dbReference type="HAMAP" id="MF_02053">
    <property type="entry name" value="LsrK"/>
    <property type="match status" value="1"/>
</dbReference>
<dbReference type="InterPro" id="IPR033676">
    <property type="entry name" value="AI-2_kinase"/>
</dbReference>
<dbReference type="InterPro" id="IPR043129">
    <property type="entry name" value="ATPase_NBD"/>
</dbReference>
<dbReference type="InterPro" id="IPR000577">
    <property type="entry name" value="Carb_kinase_FGGY"/>
</dbReference>
<dbReference type="InterPro" id="IPR018485">
    <property type="entry name" value="FGGY_C"/>
</dbReference>
<dbReference type="InterPro" id="IPR050406">
    <property type="entry name" value="FGGY_Carb_Kinase"/>
</dbReference>
<dbReference type="InterPro" id="IPR018484">
    <property type="entry name" value="FGGY_N"/>
</dbReference>
<dbReference type="NCBIfam" id="NF008187">
    <property type="entry name" value="PRK10939.1"/>
    <property type="match status" value="1"/>
</dbReference>
<dbReference type="PANTHER" id="PTHR43095:SF1">
    <property type="entry name" value="AUTOINDUCER-2 KINASE"/>
    <property type="match status" value="1"/>
</dbReference>
<dbReference type="PANTHER" id="PTHR43095">
    <property type="entry name" value="SUGAR KINASE"/>
    <property type="match status" value="1"/>
</dbReference>
<dbReference type="Pfam" id="PF02782">
    <property type="entry name" value="FGGY_C"/>
    <property type="match status" value="1"/>
</dbReference>
<dbReference type="Pfam" id="PF00370">
    <property type="entry name" value="FGGY_N"/>
    <property type="match status" value="1"/>
</dbReference>
<dbReference type="PIRSF" id="PIRSF000538">
    <property type="entry name" value="GlpK"/>
    <property type="match status" value="1"/>
</dbReference>
<dbReference type="SUPFAM" id="SSF53067">
    <property type="entry name" value="Actin-like ATPase domain"/>
    <property type="match status" value="2"/>
</dbReference>
<proteinExistence type="inferred from homology"/>
<comment type="function">
    <text evidence="1">Catalyzes the phosphorylation of autoinducer-2 (AI-2) to phospho-AI-2, which subsequently inactivates the transcriptional regulator LsrR and leads to the transcription of the lsr operon. Phosphorylates the ring-open form of (S)-4,5-dihydroxypentane-2,3-dione (DPD), which is the precursor to all AI-2 signaling molecules, at the C5 position.</text>
</comment>
<comment type="catalytic activity">
    <reaction evidence="1">
        <text>(S)-4,5-dihydroxypentane-2,3-dione + ATP = (2S)-2-hydroxy-3,4-dioxopentyl phosphate + ADP + H(+)</text>
        <dbReference type="Rhea" id="RHEA:15377"/>
        <dbReference type="ChEBI" id="CHEBI:15378"/>
        <dbReference type="ChEBI" id="CHEBI:29484"/>
        <dbReference type="ChEBI" id="CHEBI:30616"/>
        <dbReference type="ChEBI" id="CHEBI:71677"/>
        <dbReference type="ChEBI" id="CHEBI:456216"/>
        <dbReference type="EC" id="2.7.1.189"/>
    </reaction>
</comment>
<comment type="subcellular location">
    <subcellularLocation>
        <location evidence="1">Cytoplasm</location>
    </subcellularLocation>
</comment>
<comment type="similarity">
    <text evidence="1">Belongs to the FGGY kinase family.</text>
</comment>
<evidence type="ECO:0000255" key="1">
    <source>
        <dbReference type="HAMAP-Rule" id="MF_02053"/>
    </source>
</evidence>
<protein>
    <recommendedName>
        <fullName evidence="1">Autoinducer-2 kinase</fullName>
        <shortName evidence="1">AI-2 kinase</shortName>
        <ecNumber evidence="1">2.7.1.189</ecNumber>
    </recommendedName>
</protein>